<evidence type="ECO:0000305" key="1"/>
<dbReference type="EMBL" id="AL123456">
    <property type="protein sequence ID" value="CCP45140.1"/>
    <property type="molecule type" value="Genomic_DNA"/>
</dbReference>
<dbReference type="PIR" id="A70663">
    <property type="entry name" value="A70663"/>
</dbReference>
<dbReference type="RefSeq" id="WP_003900505.1">
    <property type="nucleotide sequence ID" value="NZ_NVQJ01000012.1"/>
</dbReference>
<dbReference type="RefSeq" id="YP_177870.1">
    <property type="nucleotide sequence ID" value="NC_000962.3"/>
</dbReference>
<dbReference type="SMR" id="P9WHZ9"/>
<dbReference type="STRING" id="83332.Rv2352c"/>
<dbReference type="PaxDb" id="83332-Rv2352c"/>
<dbReference type="DNASU" id="888959"/>
<dbReference type="GeneID" id="888959"/>
<dbReference type="KEGG" id="mtu:Rv2352c"/>
<dbReference type="KEGG" id="mtv:RVBD_2352c"/>
<dbReference type="TubercuList" id="Rv2352c"/>
<dbReference type="eggNOG" id="COG5651">
    <property type="taxonomic scope" value="Bacteria"/>
</dbReference>
<dbReference type="InParanoid" id="P9WHZ9"/>
<dbReference type="OrthoDB" id="4753779at2"/>
<dbReference type="PhylomeDB" id="P9WHZ9"/>
<dbReference type="PHI-base" id="PHI:11634"/>
<dbReference type="Proteomes" id="UP000001584">
    <property type="component" value="Chromosome"/>
</dbReference>
<dbReference type="GO" id="GO:0052572">
    <property type="term" value="P:response to host immune response"/>
    <property type="evidence" value="ECO:0000318"/>
    <property type="project" value="GO_Central"/>
</dbReference>
<dbReference type="GO" id="GO:0039588">
    <property type="term" value="P:symbiont-mediated suppression of host antigen processing and presentation"/>
    <property type="evidence" value="ECO:0000269"/>
    <property type="project" value="SigSci"/>
</dbReference>
<dbReference type="FunFam" id="1.20.1260.20:FF:000001">
    <property type="entry name" value="PPE family protein PPE41"/>
    <property type="match status" value="1"/>
</dbReference>
<dbReference type="Gene3D" id="1.20.1260.20">
    <property type="entry name" value="PPE superfamily"/>
    <property type="match status" value="1"/>
</dbReference>
<dbReference type="InterPro" id="IPR022171">
    <property type="entry name" value="PPE_C"/>
</dbReference>
<dbReference type="InterPro" id="IPR000030">
    <property type="entry name" value="PPE_dom"/>
</dbReference>
<dbReference type="InterPro" id="IPR038332">
    <property type="entry name" value="PPE_sf"/>
</dbReference>
<dbReference type="PANTHER" id="PTHR46766">
    <property type="entry name" value="GLUTAMINE-RICH PROTEIN 2"/>
    <property type="match status" value="1"/>
</dbReference>
<dbReference type="PANTHER" id="PTHR46766:SF1">
    <property type="entry name" value="GLUTAMINE-RICH PROTEIN 2"/>
    <property type="match status" value="1"/>
</dbReference>
<dbReference type="Pfam" id="PF00823">
    <property type="entry name" value="PPE"/>
    <property type="match status" value="1"/>
</dbReference>
<dbReference type="Pfam" id="PF12484">
    <property type="entry name" value="PPE-SVP"/>
    <property type="match status" value="1"/>
</dbReference>
<dbReference type="SUPFAM" id="SSF140459">
    <property type="entry name" value="PE/PPE dimer-like"/>
    <property type="match status" value="1"/>
</dbReference>
<organism>
    <name type="scientific">Mycobacterium tuberculosis (strain ATCC 25618 / H37Rv)</name>
    <dbReference type="NCBI Taxonomy" id="83332"/>
    <lineage>
        <taxon>Bacteria</taxon>
        <taxon>Bacillati</taxon>
        <taxon>Actinomycetota</taxon>
        <taxon>Actinomycetes</taxon>
        <taxon>Mycobacteriales</taxon>
        <taxon>Mycobacteriaceae</taxon>
        <taxon>Mycobacterium</taxon>
        <taxon>Mycobacterium tuberculosis complex</taxon>
    </lineage>
</organism>
<accession>P9WHZ9</accession>
<accession>L0T9K0</accession>
<accession>Q79FF4</accession>
<accession>Q7D7A2</accession>
<feature type="chain" id="PRO_0000378482" description="Uncharacterized PPE family protein PPE38">
    <location>
        <begin position="1"/>
        <end position="391"/>
    </location>
</feature>
<name>PPE38_MYCTU</name>
<keyword id="KW-1185">Reference proteome</keyword>
<reference key="1">
    <citation type="journal article" date="1998" name="Nature">
        <title>Deciphering the biology of Mycobacterium tuberculosis from the complete genome sequence.</title>
        <authorList>
            <person name="Cole S.T."/>
            <person name="Brosch R."/>
            <person name="Parkhill J."/>
            <person name="Garnier T."/>
            <person name="Churcher C.M."/>
            <person name="Harris D.E."/>
            <person name="Gordon S.V."/>
            <person name="Eiglmeier K."/>
            <person name="Gas S."/>
            <person name="Barry C.E. III"/>
            <person name="Tekaia F."/>
            <person name="Badcock K."/>
            <person name="Basham D."/>
            <person name="Brown D."/>
            <person name="Chillingworth T."/>
            <person name="Connor R."/>
            <person name="Davies R.M."/>
            <person name="Devlin K."/>
            <person name="Feltwell T."/>
            <person name="Gentles S."/>
            <person name="Hamlin N."/>
            <person name="Holroyd S."/>
            <person name="Hornsby T."/>
            <person name="Jagels K."/>
            <person name="Krogh A."/>
            <person name="McLean J."/>
            <person name="Moule S."/>
            <person name="Murphy L.D."/>
            <person name="Oliver S."/>
            <person name="Osborne J."/>
            <person name="Quail M.A."/>
            <person name="Rajandream M.A."/>
            <person name="Rogers J."/>
            <person name="Rutter S."/>
            <person name="Seeger K."/>
            <person name="Skelton S."/>
            <person name="Squares S."/>
            <person name="Squares R."/>
            <person name="Sulston J.E."/>
            <person name="Taylor K."/>
            <person name="Whitehead S."/>
            <person name="Barrell B.G."/>
        </authorList>
    </citation>
    <scope>NUCLEOTIDE SEQUENCE [LARGE SCALE GENOMIC DNA]</scope>
    <source>
        <strain>ATCC 25618 / H37Rv</strain>
    </source>
</reference>
<reference key="2">
    <citation type="journal article" date="2011" name="Mol. Cell. Proteomics">
        <title>Proteogenomic analysis of Mycobacterium tuberculosis by high resolution mass spectrometry.</title>
        <authorList>
            <person name="Kelkar D.S."/>
            <person name="Kumar D."/>
            <person name="Kumar P."/>
            <person name="Balakrishnan L."/>
            <person name="Muthusamy B."/>
            <person name="Yadav A.K."/>
            <person name="Shrivastava P."/>
            <person name="Marimuthu A."/>
            <person name="Anand S."/>
            <person name="Sundaram H."/>
            <person name="Kingsbury R."/>
            <person name="Harsha H.C."/>
            <person name="Nair B."/>
            <person name="Prasad T.S."/>
            <person name="Chauhan D.S."/>
            <person name="Katoch K."/>
            <person name="Katoch V.M."/>
            <person name="Kumar P."/>
            <person name="Chaerkady R."/>
            <person name="Ramachandran S."/>
            <person name="Dash D."/>
            <person name="Pandey A."/>
        </authorList>
    </citation>
    <scope>IDENTIFICATION BY MASS SPECTROMETRY [LARGE SCALE ANALYSIS]</scope>
    <source>
        <strain>ATCC 25618 / H37Rv</strain>
    </source>
</reference>
<proteinExistence type="evidence at protein level"/>
<protein>
    <recommendedName>
        <fullName>Uncharacterized PPE family protein PPE38</fullName>
    </recommendedName>
</protein>
<sequence>MILDFSWLPPEINSARIYAGAGSGPLFMAAAAWEGLAADLRASASSFDAVIAGLAAGPWSGPASVAMAGAAAPYVGWLSAAAGQAELSAGQATAAATAFEAALAATVHPAAVTANRVLLGALVATNILGQNTPAIAATEFDYVEMWAQDVGAMVGYHAGAAAVAETLTPFSVPPLDLAGLASQAGAQLTGMATSVSAALSPIAEGAVEGVPAVVAAAQSVAAGLPVDAALQVGQAAAYPASMLIGPMMQLAQMGTTANTAGLAGAEAAGLAAADVPTFAGDIASGTGLGGAGGLGAGMSAELGKARLVGAMSVPPTWEGSVPARMASSAMAGLGAMPAEVPAAGGPMGMMPMPMGMGGAGAGMPAGMMGRGGANPHVVQARPSVVPRVGIG</sequence>
<gene>
    <name type="primary">PPE38</name>
    <name type="ordered locus">Rv2352c</name>
</gene>
<comment type="similarity">
    <text evidence="1">Belongs to the mycobacterial PPE family.</text>
</comment>